<reference key="1">
    <citation type="journal article" date="2008" name="J. Bacteriol.">
        <title>The pangenome structure of Escherichia coli: comparative genomic analysis of E. coli commensal and pathogenic isolates.</title>
        <authorList>
            <person name="Rasko D.A."/>
            <person name="Rosovitz M.J."/>
            <person name="Myers G.S.A."/>
            <person name="Mongodin E.F."/>
            <person name="Fricke W.F."/>
            <person name="Gajer P."/>
            <person name="Crabtree J."/>
            <person name="Sebaihia M."/>
            <person name="Thomson N.R."/>
            <person name="Chaudhuri R."/>
            <person name="Henderson I.R."/>
            <person name="Sperandio V."/>
            <person name="Ravel J."/>
        </authorList>
    </citation>
    <scope>NUCLEOTIDE SEQUENCE [LARGE SCALE GENOMIC DNA]</scope>
    <source>
        <strain>HS</strain>
    </source>
</reference>
<name>HLDD_ECOHS</name>
<feature type="chain" id="PRO_1000069354" description="ADP-L-glycero-D-manno-heptose-6-epimerase">
    <location>
        <begin position="1"/>
        <end position="310"/>
    </location>
</feature>
<feature type="active site" description="Proton acceptor" evidence="1">
    <location>
        <position position="140"/>
    </location>
</feature>
<feature type="active site" description="Proton acceptor" evidence="1">
    <location>
        <position position="178"/>
    </location>
</feature>
<feature type="binding site" evidence="1">
    <location>
        <begin position="10"/>
        <end position="11"/>
    </location>
    <ligand>
        <name>NADP(+)</name>
        <dbReference type="ChEBI" id="CHEBI:58349"/>
    </ligand>
</feature>
<feature type="binding site" evidence="1">
    <location>
        <begin position="31"/>
        <end position="32"/>
    </location>
    <ligand>
        <name>NADP(+)</name>
        <dbReference type="ChEBI" id="CHEBI:58349"/>
    </ligand>
</feature>
<feature type="binding site" evidence="1">
    <location>
        <position position="38"/>
    </location>
    <ligand>
        <name>NADP(+)</name>
        <dbReference type="ChEBI" id="CHEBI:58349"/>
    </ligand>
</feature>
<feature type="binding site" evidence="1">
    <location>
        <position position="53"/>
    </location>
    <ligand>
        <name>NADP(+)</name>
        <dbReference type="ChEBI" id="CHEBI:58349"/>
    </ligand>
</feature>
<feature type="binding site" evidence="1">
    <location>
        <begin position="75"/>
        <end position="79"/>
    </location>
    <ligand>
        <name>NADP(+)</name>
        <dbReference type="ChEBI" id="CHEBI:58349"/>
    </ligand>
</feature>
<feature type="binding site" evidence="1">
    <location>
        <position position="92"/>
    </location>
    <ligand>
        <name>NADP(+)</name>
        <dbReference type="ChEBI" id="CHEBI:58349"/>
    </ligand>
</feature>
<feature type="binding site" evidence="1">
    <location>
        <position position="144"/>
    </location>
    <ligand>
        <name>NADP(+)</name>
        <dbReference type="ChEBI" id="CHEBI:58349"/>
    </ligand>
</feature>
<feature type="binding site" evidence="1">
    <location>
        <position position="169"/>
    </location>
    <ligand>
        <name>substrate</name>
    </ligand>
</feature>
<feature type="binding site" evidence="1">
    <location>
        <position position="170"/>
    </location>
    <ligand>
        <name>NADP(+)</name>
        <dbReference type="ChEBI" id="CHEBI:58349"/>
    </ligand>
</feature>
<feature type="binding site" evidence="1">
    <location>
        <position position="178"/>
    </location>
    <ligand>
        <name>NADP(+)</name>
        <dbReference type="ChEBI" id="CHEBI:58349"/>
    </ligand>
</feature>
<feature type="binding site" evidence="1">
    <location>
        <position position="180"/>
    </location>
    <ligand>
        <name>substrate</name>
    </ligand>
</feature>
<feature type="binding site" evidence="1">
    <location>
        <position position="187"/>
    </location>
    <ligand>
        <name>substrate</name>
    </ligand>
</feature>
<feature type="binding site" evidence="1">
    <location>
        <begin position="201"/>
        <end position="204"/>
    </location>
    <ligand>
        <name>substrate</name>
    </ligand>
</feature>
<feature type="binding site" evidence="1">
    <location>
        <position position="209"/>
    </location>
    <ligand>
        <name>substrate</name>
    </ligand>
</feature>
<feature type="binding site" evidence="1">
    <location>
        <position position="272"/>
    </location>
    <ligand>
        <name>substrate</name>
    </ligand>
</feature>
<feature type="modified residue" description="N6-acetyllysine" evidence="1">
    <location>
        <position position="267"/>
    </location>
</feature>
<organism>
    <name type="scientific">Escherichia coli O9:H4 (strain HS)</name>
    <dbReference type="NCBI Taxonomy" id="331112"/>
    <lineage>
        <taxon>Bacteria</taxon>
        <taxon>Pseudomonadati</taxon>
        <taxon>Pseudomonadota</taxon>
        <taxon>Gammaproteobacteria</taxon>
        <taxon>Enterobacterales</taxon>
        <taxon>Enterobacteriaceae</taxon>
        <taxon>Escherichia</taxon>
    </lineage>
</organism>
<protein>
    <recommendedName>
        <fullName evidence="1">ADP-L-glycero-D-manno-heptose-6-epimerase</fullName>
        <ecNumber evidence="1">5.1.3.20</ecNumber>
    </recommendedName>
    <alternativeName>
        <fullName evidence="1">ADP-L-glycero-beta-D-manno-heptose-6-epimerase</fullName>
        <shortName evidence="1">ADP-glyceromanno-heptose 6-epimerase</shortName>
        <shortName evidence="1">ADP-hep 6-epimerase</shortName>
        <shortName evidence="1">AGME</shortName>
    </alternativeName>
</protein>
<dbReference type="EC" id="5.1.3.20" evidence="1"/>
<dbReference type="EMBL" id="CP000802">
    <property type="protein sequence ID" value="ABV08037.1"/>
    <property type="molecule type" value="Genomic_DNA"/>
</dbReference>
<dbReference type="SMR" id="A8A683"/>
<dbReference type="KEGG" id="ecx:EcHS_A3830"/>
<dbReference type="HOGENOM" id="CLU_007383_1_3_6"/>
<dbReference type="UniPathway" id="UPA00356">
    <property type="reaction ID" value="UER00440"/>
</dbReference>
<dbReference type="GO" id="GO:0008712">
    <property type="term" value="F:ADP-glyceromanno-heptose 6-epimerase activity"/>
    <property type="evidence" value="ECO:0007669"/>
    <property type="project" value="UniProtKB-UniRule"/>
</dbReference>
<dbReference type="GO" id="GO:0050661">
    <property type="term" value="F:NADP binding"/>
    <property type="evidence" value="ECO:0007669"/>
    <property type="project" value="InterPro"/>
</dbReference>
<dbReference type="GO" id="GO:0097171">
    <property type="term" value="P:ADP-L-glycero-beta-D-manno-heptose biosynthetic process"/>
    <property type="evidence" value="ECO:0007669"/>
    <property type="project" value="UniProtKB-UniPathway"/>
</dbReference>
<dbReference type="GO" id="GO:0005975">
    <property type="term" value="P:carbohydrate metabolic process"/>
    <property type="evidence" value="ECO:0007669"/>
    <property type="project" value="UniProtKB-UniRule"/>
</dbReference>
<dbReference type="CDD" id="cd05248">
    <property type="entry name" value="ADP_GME_SDR_e"/>
    <property type="match status" value="1"/>
</dbReference>
<dbReference type="Gene3D" id="3.40.50.720">
    <property type="entry name" value="NAD(P)-binding Rossmann-like Domain"/>
    <property type="match status" value="1"/>
</dbReference>
<dbReference type="Gene3D" id="3.90.25.10">
    <property type="entry name" value="UDP-galactose 4-epimerase, domain 1"/>
    <property type="match status" value="1"/>
</dbReference>
<dbReference type="HAMAP" id="MF_01601">
    <property type="entry name" value="Heptose_epimerase"/>
    <property type="match status" value="1"/>
</dbReference>
<dbReference type="InterPro" id="IPR001509">
    <property type="entry name" value="Epimerase_deHydtase"/>
</dbReference>
<dbReference type="InterPro" id="IPR011912">
    <property type="entry name" value="Heptose_epim"/>
</dbReference>
<dbReference type="InterPro" id="IPR036291">
    <property type="entry name" value="NAD(P)-bd_dom_sf"/>
</dbReference>
<dbReference type="NCBIfam" id="TIGR02197">
    <property type="entry name" value="heptose_epim"/>
    <property type="match status" value="1"/>
</dbReference>
<dbReference type="NCBIfam" id="NF008360">
    <property type="entry name" value="PRK11150.1"/>
    <property type="match status" value="1"/>
</dbReference>
<dbReference type="PANTHER" id="PTHR43103:SF3">
    <property type="entry name" value="ADP-L-GLYCERO-D-MANNO-HEPTOSE-6-EPIMERASE"/>
    <property type="match status" value="1"/>
</dbReference>
<dbReference type="PANTHER" id="PTHR43103">
    <property type="entry name" value="NUCLEOSIDE-DIPHOSPHATE-SUGAR EPIMERASE"/>
    <property type="match status" value="1"/>
</dbReference>
<dbReference type="Pfam" id="PF01370">
    <property type="entry name" value="Epimerase"/>
    <property type="match status" value="1"/>
</dbReference>
<dbReference type="SUPFAM" id="SSF51735">
    <property type="entry name" value="NAD(P)-binding Rossmann-fold domains"/>
    <property type="match status" value="1"/>
</dbReference>
<comment type="function">
    <text evidence="1">Catalyzes the interconversion between ADP-D-glycero-beta-D-manno-heptose and ADP-L-glycero-beta-D-manno-heptose via an epimerization at carbon 6 of the heptose.</text>
</comment>
<comment type="catalytic activity">
    <reaction evidence="1">
        <text>ADP-D-glycero-beta-D-manno-heptose = ADP-L-glycero-beta-D-manno-heptose</text>
        <dbReference type="Rhea" id="RHEA:17577"/>
        <dbReference type="ChEBI" id="CHEBI:59967"/>
        <dbReference type="ChEBI" id="CHEBI:61506"/>
        <dbReference type="EC" id="5.1.3.20"/>
    </reaction>
</comment>
<comment type="cofactor">
    <cofactor evidence="1">
        <name>NADP(+)</name>
        <dbReference type="ChEBI" id="CHEBI:58349"/>
    </cofactor>
    <text evidence="1">Binds 1 NADP(+) per subunit.</text>
</comment>
<comment type="pathway">
    <text evidence="1">Nucleotide-sugar biosynthesis; ADP-L-glycero-beta-D-manno-heptose biosynthesis; ADP-L-glycero-beta-D-manno-heptose from D-glycero-beta-D-manno-heptose 7-phosphate: step 4/4.</text>
</comment>
<comment type="subunit">
    <text evidence="1">Homopentamer.</text>
</comment>
<comment type="domain">
    <text evidence="1">Contains a large N-terminal NADP-binding domain, and a smaller C-terminal substrate-binding domain.</text>
</comment>
<comment type="similarity">
    <text evidence="1">Belongs to the NAD(P)-dependent epimerase/dehydratase family. HldD subfamily.</text>
</comment>
<gene>
    <name evidence="1" type="primary">hldD</name>
    <name type="ordered locus">EcHS_A3830</name>
</gene>
<accession>A8A683</accession>
<proteinExistence type="inferred from homology"/>
<evidence type="ECO:0000255" key="1">
    <source>
        <dbReference type="HAMAP-Rule" id="MF_01601"/>
    </source>
</evidence>
<sequence>MIIVTGGAGFIGSNIVKALNDKGITDILVVDNLKDGTKFVNLVDLDIADYMDKEDFLIQIMAGEEFGDVEAIFHEGACSSTTEWDGKYMMDNNYQYSKELLHYCLEREIPFLYASSAATYGGRTSDFIESREYEKPLNVYGYSKFLFDEYVRQILPEANSQIVGFRYFNVYGPREGHKGSMASVAFHLNTQLNKGESPKLFEGSENFKRDFVYVGDVADVNLWFLENGVSGIFNLGTGRAESFQAVADATLAYHKKGQIEYIPFPDKLKGRYQAFTQADLTNLRAAGYDKPFKTVAEGVMEYMAWLNRDA</sequence>
<keyword id="KW-0007">Acetylation</keyword>
<keyword id="KW-0119">Carbohydrate metabolism</keyword>
<keyword id="KW-0413">Isomerase</keyword>
<keyword id="KW-0521">NADP</keyword>